<name>SYD_LIMRD</name>
<gene>
    <name evidence="1" type="primary">aspS</name>
    <name type="ordered locus">Lreu_0724</name>
</gene>
<protein>
    <recommendedName>
        <fullName evidence="1">Aspartate--tRNA ligase</fullName>
        <ecNumber evidence="1">6.1.1.12</ecNumber>
    </recommendedName>
    <alternativeName>
        <fullName evidence="1">Aspartyl-tRNA synthetase</fullName>
        <shortName evidence="1">AspRS</shortName>
    </alternativeName>
</protein>
<feature type="chain" id="PRO_1000057304" description="Aspartate--tRNA ligase">
    <location>
        <begin position="1"/>
        <end position="600"/>
    </location>
</feature>
<feature type="region of interest" description="Aspartate" evidence="1">
    <location>
        <begin position="199"/>
        <end position="202"/>
    </location>
</feature>
<feature type="binding site" evidence="1">
    <location>
        <position position="175"/>
    </location>
    <ligand>
        <name>L-aspartate</name>
        <dbReference type="ChEBI" id="CHEBI:29991"/>
    </ligand>
</feature>
<feature type="binding site" evidence="1">
    <location>
        <begin position="221"/>
        <end position="223"/>
    </location>
    <ligand>
        <name>ATP</name>
        <dbReference type="ChEBI" id="CHEBI:30616"/>
    </ligand>
</feature>
<feature type="binding site" evidence="1">
    <location>
        <position position="221"/>
    </location>
    <ligand>
        <name>L-aspartate</name>
        <dbReference type="ChEBI" id="CHEBI:29991"/>
    </ligand>
</feature>
<feature type="binding site" evidence="1">
    <location>
        <position position="230"/>
    </location>
    <ligand>
        <name>ATP</name>
        <dbReference type="ChEBI" id="CHEBI:30616"/>
    </ligand>
</feature>
<feature type="binding site" evidence="1">
    <location>
        <position position="448"/>
    </location>
    <ligand>
        <name>L-aspartate</name>
        <dbReference type="ChEBI" id="CHEBI:29991"/>
    </ligand>
</feature>
<feature type="binding site" evidence="1">
    <location>
        <position position="484"/>
    </location>
    <ligand>
        <name>ATP</name>
        <dbReference type="ChEBI" id="CHEBI:30616"/>
    </ligand>
</feature>
<feature type="binding site" evidence="1">
    <location>
        <position position="491"/>
    </location>
    <ligand>
        <name>L-aspartate</name>
        <dbReference type="ChEBI" id="CHEBI:29991"/>
    </ligand>
</feature>
<feature type="binding site" evidence="1">
    <location>
        <begin position="536"/>
        <end position="539"/>
    </location>
    <ligand>
        <name>ATP</name>
        <dbReference type="ChEBI" id="CHEBI:30616"/>
    </ligand>
</feature>
<dbReference type="EC" id="6.1.1.12" evidence="1"/>
<dbReference type="EMBL" id="CP000705">
    <property type="protein sequence ID" value="ABQ82988.1"/>
    <property type="molecule type" value="Genomic_DNA"/>
</dbReference>
<dbReference type="RefSeq" id="WP_003668146.1">
    <property type="nucleotide sequence ID" value="NC_009513.1"/>
</dbReference>
<dbReference type="SMR" id="A5VJG4"/>
<dbReference type="STRING" id="557436.Lreu_0724"/>
<dbReference type="KEGG" id="lre:Lreu_0724"/>
<dbReference type="PATRIC" id="fig|557436.17.peg.526"/>
<dbReference type="eggNOG" id="COG0173">
    <property type="taxonomic scope" value="Bacteria"/>
</dbReference>
<dbReference type="HOGENOM" id="CLU_014330_3_2_9"/>
<dbReference type="Proteomes" id="UP000001991">
    <property type="component" value="Chromosome"/>
</dbReference>
<dbReference type="GO" id="GO:0005737">
    <property type="term" value="C:cytoplasm"/>
    <property type="evidence" value="ECO:0007669"/>
    <property type="project" value="UniProtKB-SubCell"/>
</dbReference>
<dbReference type="GO" id="GO:0004815">
    <property type="term" value="F:aspartate-tRNA ligase activity"/>
    <property type="evidence" value="ECO:0007669"/>
    <property type="project" value="UniProtKB-UniRule"/>
</dbReference>
<dbReference type="GO" id="GO:0005524">
    <property type="term" value="F:ATP binding"/>
    <property type="evidence" value="ECO:0007669"/>
    <property type="project" value="UniProtKB-UniRule"/>
</dbReference>
<dbReference type="GO" id="GO:0140096">
    <property type="term" value="F:catalytic activity, acting on a protein"/>
    <property type="evidence" value="ECO:0007669"/>
    <property type="project" value="UniProtKB-ARBA"/>
</dbReference>
<dbReference type="GO" id="GO:0003676">
    <property type="term" value="F:nucleic acid binding"/>
    <property type="evidence" value="ECO:0007669"/>
    <property type="project" value="InterPro"/>
</dbReference>
<dbReference type="GO" id="GO:0016740">
    <property type="term" value="F:transferase activity"/>
    <property type="evidence" value="ECO:0007669"/>
    <property type="project" value="UniProtKB-ARBA"/>
</dbReference>
<dbReference type="GO" id="GO:0006422">
    <property type="term" value="P:aspartyl-tRNA aminoacylation"/>
    <property type="evidence" value="ECO:0007669"/>
    <property type="project" value="UniProtKB-UniRule"/>
</dbReference>
<dbReference type="CDD" id="cd00777">
    <property type="entry name" value="AspRS_core"/>
    <property type="match status" value="1"/>
</dbReference>
<dbReference type="CDD" id="cd04317">
    <property type="entry name" value="EcAspRS_like_N"/>
    <property type="match status" value="1"/>
</dbReference>
<dbReference type="Gene3D" id="3.30.930.10">
    <property type="entry name" value="Bira Bifunctional Protein, Domain 2"/>
    <property type="match status" value="1"/>
</dbReference>
<dbReference type="Gene3D" id="3.30.1360.30">
    <property type="entry name" value="GAD-like domain"/>
    <property type="match status" value="1"/>
</dbReference>
<dbReference type="Gene3D" id="2.40.50.140">
    <property type="entry name" value="Nucleic acid-binding proteins"/>
    <property type="match status" value="1"/>
</dbReference>
<dbReference type="HAMAP" id="MF_00044">
    <property type="entry name" value="Asp_tRNA_synth_type1"/>
    <property type="match status" value="1"/>
</dbReference>
<dbReference type="InterPro" id="IPR004364">
    <property type="entry name" value="Aa-tRNA-synt_II"/>
</dbReference>
<dbReference type="InterPro" id="IPR006195">
    <property type="entry name" value="aa-tRNA-synth_II"/>
</dbReference>
<dbReference type="InterPro" id="IPR045864">
    <property type="entry name" value="aa-tRNA-synth_II/BPL/LPL"/>
</dbReference>
<dbReference type="InterPro" id="IPR004524">
    <property type="entry name" value="Asp-tRNA-ligase_1"/>
</dbReference>
<dbReference type="InterPro" id="IPR047089">
    <property type="entry name" value="Asp-tRNA-ligase_1_N"/>
</dbReference>
<dbReference type="InterPro" id="IPR002312">
    <property type="entry name" value="Asp/Asn-tRNA-synth_IIb"/>
</dbReference>
<dbReference type="InterPro" id="IPR047090">
    <property type="entry name" value="AspRS_core"/>
</dbReference>
<dbReference type="InterPro" id="IPR004115">
    <property type="entry name" value="GAD-like_sf"/>
</dbReference>
<dbReference type="InterPro" id="IPR029351">
    <property type="entry name" value="GAD_dom"/>
</dbReference>
<dbReference type="InterPro" id="IPR012340">
    <property type="entry name" value="NA-bd_OB-fold"/>
</dbReference>
<dbReference type="InterPro" id="IPR004365">
    <property type="entry name" value="NA-bd_OB_tRNA"/>
</dbReference>
<dbReference type="NCBIfam" id="TIGR00459">
    <property type="entry name" value="aspS_bact"/>
    <property type="match status" value="1"/>
</dbReference>
<dbReference type="NCBIfam" id="NF001750">
    <property type="entry name" value="PRK00476.1"/>
    <property type="match status" value="1"/>
</dbReference>
<dbReference type="PANTHER" id="PTHR22594:SF5">
    <property type="entry name" value="ASPARTATE--TRNA LIGASE, MITOCHONDRIAL"/>
    <property type="match status" value="1"/>
</dbReference>
<dbReference type="PANTHER" id="PTHR22594">
    <property type="entry name" value="ASPARTYL/LYSYL-TRNA SYNTHETASE"/>
    <property type="match status" value="1"/>
</dbReference>
<dbReference type="Pfam" id="PF02938">
    <property type="entry name" value="GAD"/>
    <property type="match status" value="1"/>
</dbReference>
<dbReference type="Pfam" id="PF00152">
    <property type="entry name" value="tRNA-synt_2"/>
    <property type="match status" value="1"/>
</dbReference>
<dbReference type="Pfam" id="PF01336">
    <property type="entry name" value="tRNA_anti-codon"/>
    <property type="match status" value="1"/>
</dbReference>
<dbReference type="PRINTS" id="PR01042">
    <property type="entry name" value="TRNASYNTHASP"/>
</dbReference>
<dbReference type="SUPFAM" id="SSF55681">
    <property type="entry name" value="Class II aaRS and biotin synthetases"/>
    <property type="match status" value="1"/>
</dbReference>
<dbReference type="SUPFAM" id="SSF55261">
    <property type="entry name" value="GAD domain-like"/>
    <property type="match status" value="1"/>
</dbReference>
<dbReference type="SUPFAM" id="SSF50249">
    <property type="entry name" value="Nucleic acid-binding proteins"/>
    <property type="match status" value="1"/>
</dbReference>
<dbReference type="PROSITE" id="PS50862">
    <property type="entry name" value="AA_TRNA_LIGASE_II"/>
    <property type="match status" value="1"/>
</dbReference>
<reference key="1">
    <citation type="journal article" date="2011" name="PLoS Genet.">
        <title>The evolution of host specialization in the vertebrate gut symbiont Lactobacillus reuteri.</title>
        <authorList>
            <person name="Frese S.A."/>
            <person name="Benson A.K."/>
            <person name="Tannock G.W."/>
            <person name="Loach D.M."/>
            <person name="Kim J."/>
            <person name="Zhang M."/>
            <person name="Oh P.L."/>
            <person name="Heng N.C."/>
            <person name="Patil P.B."/>
            <person name="Juge N."/>
            <person name="Mackenzie D.A."/>
            <person name="Pearson B.M."/>
            <person name="Lapidus A."/>
            <person name="Dalin E."/>
            <person name="Tice H."/>
            <person name="Goltsman E."/>
            <person name="Land M."/>
            <person name="Hauser L."/>
            <person name="Ivanova N."/>
            <person name="Kyrpides N.C."/>
            <person name="Walter J."/>
        </authorList>
    </citation>
    <scope>NUCLEOTIDE SEQUENCE [LARGE SCALE GENOMIC DNA]</scope>
    <source>
        <strain>DSM 20016</strain>
    </source>
</reference>
<sequence>MKRTNYAGDTNEQQVGQEVVLKGWVAKRRNLGGLIFIDLWDREGIVQLVFNEKENPEAFEIANAVRNQYVLEVQGKVQLRAEKEINPDMKTGKVEVAVDEVKVLAKSETTPFDITDGVDASEDLRMKYRYLDLRRPEMMRNLKLRSKVASIVHNYYDNEGFMDVETPDLTRSTPEGARDYIVPSRVYPGHFYALPQSPQLFKQLLMAAGVDKYYQLARCFRDEDLRGDRQPEFTQIDTEMSFATPEDIQTVTEGLIKRVMKEIVGVDVKTPFPRMEWQEAMDKYGSDKPDTRFGMLIHDLSDIVKDSSFKVFANTVADGNYVRAIRVPGGADKYSRKDISKYEEYIKRFGAKGLAWVKVTADGYNGPVAKFLNDQVAQINEEMDAKEGDLILFVAGSFHVVSDSLGYLRRAIAEELDMIKPDQWNYLWVVNWPMFEYDEGFGKWIAAHHPFTMLNEEDLHYLEDGEDPHKAHAQSYDIILNGNEIGGGSIRIHDPKIQEKVLKALGYTKERAEARFGFLLKALTMGMPPEGGLAFGLDRWVMLLAQADSIRDVIPFPKNSKAVEPLTAAPGKVSEQQLDDLKIEFDEKIDYKLDQDPDEQ</sequence>
<accession>A5VJG4</accession>
<keyword id="KW-0030">Aminoacyl-tRNA synthetase</keyword>
<keyword id="KW-0067">ATP-binding</keyword>
<keyword id="KW-0963">Cytoplasm</keyword>
<keyword id="KW-0436">Ligase</keyword>
<keyword id="KW-0547">Nucleotide-binding</keyword>
<keyword id="KW-0648">Protein biosynthesis</keyword>
<keyword id="KW-1185">Reference proteome</keyword>
<evidence type="ECO:0000255" key="1">
    <source>
        <dbReference type="HAMAP-Rule" id="MF_00044"/>
    </source>
</evidence>
<proteinExistence type="inferred from homology"/>
<comment type="function">
    <text evidence="1">Catalyzes the attachment of L-aspartate to tRNA(Asp) in a two-step reaction: L-aspartate is first activated by ATP to form Asp-AMP and then transferred to the acceptor end of tRNA(Asp).</text>
</comment>
<comment type="catalytic activity">
    <reaction evidence="1">
        <text>tRNA(Asp) + L-aspartate + ATP = L-aspartyl-tRNA(Asp) + AMP + diphosphate</text>
        <dbReference type="Rhea" id="RHEA:19649"/>
        <dbReference type="Rhea" id="RHEA-COMP:9660"/>
        <dbReference type="Rhea" id="RHEA-COMP:9678"/>
        <dbReference type="ChEBI" id="CHEBI:29991"/>
        <dbReference type="ChEBI" id="CHEBI:30616"/>
        <dbReference type="ChEBI" id="CHEBI:33019"/>
        <dbReference type="ChEBI" id="CHEBI:78442"/>
        <dbReference type="ChEBI" id="CHEBI:78516"/>
        <dbReference type="ChEBI" id="CHEBI:456215"/>
        <dbReference type="EC" id="6.1.1.12"/>
    </reaction>
</comment>
<comment type="subunit">
    <text evidence="1">Homodimer.</text>
</comment>
<comment type="subcellular location">
    <subcellularLocation>
        <location evidence="1">Cytoplasm</location>
    </subcellularLocation>
</comment>
<comment type="similarity">
    <text evidence="1">Belongs to the class-II aminoacyl-tRNA synthetase family. Type 1 subfamily.</text>
</comment>
<organism>
    <name type="scientific">Limosilactobacillus reuteri (strain DSM 20016)</name>
    <name type="common">Lactobacillus reuteri</name>
    <dbReference type="NCBI Taxonomy" id="557436"/>
    <lineage>
        <taxon>Bacteria</taxon>
        <taxon>Bacillati</taxon>
        <taxon>Bacillota</taxon>
        <taxon>Bacilli</taxon>
        <taxon>Lactobacillales</taxon>
        <taxon>Lactobacillaceae</taxon>
        <taxon>Limosilactobacillus</taxon>
    </lineage>
</organism>